<proteinExistence type="predicted"/>
<reference key="1">
    <citation type="journal article" date="1999" name="Nature">
        <title>Sequence and analysis of chromosome 4 of the plant Arabidopsis thaliana.</title>
        <authorList>
            <person name="Mayer K.F.X."/>
            <person name="Schueller C."/>
            <person name="Wambutt R."/>
            <person name="Murphy G."/>
            <person name="Volckaert G."/>
            <person name="Pohl T."/>
            <person name="Duesterhoeft A."/>
            <person name="Stiekema W."/>
            <person name="Entian K.-D."/>
            <person name="Terryn N."/>
            <person name="Harris B."/>
            <person name="Ansorge W."/>
            <person name="Brandt P."/>
            <person name="Grivell L.A."/>
            <person name="Rieger M."/>
            <person name="Weichselgartner M."/>
            <person name="de Simone V."/>
            <person name="Obermaier B."/>
            <person name="Mache R."/>
            <person name="Mueller M."/>
            <person name="Kreis M."/>
            <person name="Delseny M."/>
            <person name="Puigdomenech P."/>
            <person name="Watson M."/>
            <person name="Schmidtheini T."/>
            <person name="Reichert B."/>
            <person name="Portetelle D."/>
            <person name="Perez-Alonso M."/>
            <person name="Boutry M."/>
            <person name="Bancroft I."/>
            <person name="Vos P."/>
            <person name="Hoheisel J."/>
            <person name="Zimmermann W."/>
            <person name="Wedler H."/>
            <person name="Ridley P."/>
            <person name="Langham S.-A."/>
            <person name="McCullagh B."/>
            <person name="Bilham L."/>
            <person name="Robben J."/>
            <person name="van der Schueren J."/>
            <person name="Grymonprez B."/>
            <person name="Chuang Y.-J."/>
            <person name="Vandenbussche F."/>
            <person name="Braeken M."/>
            <person name="Weltjens I."/>
            <person name="Voet M."/>
            <person name="Bastiaens I."/>
            <person name="Aert R."/>
            <person name="Defoor E."/>
            <person name="Weitzenegger T."/>
            <person name="Bothe G."/>
            <person name="Ramsperger U."/>
            <person name="Hilbert H."/>
            <person name="Braun M."/>
            <person name="Holzer E."/>
            <person name="Brandt A."/>
            <person name="Peters S."/>
            <person name="van Staveren M."/>
            <person name="Dirkse W."/>
            <person name="Mooijman P."/>
            <person name="Klein Lankhorst R."/>
            <person name="Rose M."/>
            <person name="Hauf J."/>
            <person name="Koetter P."/>
            <person name="Berneiser S."/>
            <person name="Hempel S."/>
            <person name="Feldpausch M."/>
            <person name="Lamberth S."/>
            <person name="Van den Daele H."/>
            <person name="De Keyser A."/>
            <person name="Buysshaert C."/>
            <person name="Gielen J."/>
            <person name="Villarroel R."/>
            <person name="De Clercq R."/>
            <person name="van Montagu M."/>
            <person name="Rogers J."/>
            <person name="Cronin A."/>
            <person name="Quail M.A."/>
            <person name="Bray-Allen S."/>
            <person name="Clark L."/>
            <person name="Doggett J."/>
            <person name="Hall S."/>
            <person name="Kay M."/>
            <person name="Lennard N."/>
            <person name="McLay K."/>
            <person name="Mayes R."/>
            <person name="Pettett A."/>
            <person name="Rajandream M.A."/>
            <person name="Lyne M."/>
            <person name="Benes V."/>
            <person name="Rechmann S."/>
            <person name="Borkova D."/>
            <person name="Bloecker H."/>
            <person name="Scharfe M."/>
            <person name="Grimm M."/>
            <person name="Loehnert T.-H."/>
            <person name="Dose S."/>
            <person name="de Haan M."/>
            <person name="Maarse A.C."/>
            <person name="Schaefer M."/>
            <person name="Mueller-Auer S."/>
            <person name="Gabel C."/>
            <person name="Fuchs M."/>
            <person name="Fartmann B."/>
            <person name="Granderath K."/>
            <person name="Dauner D."/>
            <person name="Herzl A."/>
            <person name="Neumann S."/>
            <person name="Argiriou A."/>
            <person name="Vitale D."/>
            <person name="Liguori R."/>
            <person name="Piravandi E."/>
            <person name="Massenet O."/>
            <person name="Quigley F."/>
            <person name="Clabauld G."/>
            <person name="Muendlein A."/>
            <person name="Felber R."/>
            <person name="Schnabl S."/>
            <person name="Hiller R."/>
            <person name="Schmidt W."/>
            <person name="Lecharny A."/>
            <person name="Aubourg S."/>
            <person name="Chefdor F."/>
            <person name="Cooke R."/>
            <person name="Berger C."/>
            <person name="Monfort A."/>
            <person name="Casacuberta E."/>
            <person name="Gibbons T."/>
            <person name="Weber N."/>
            <person name="Vandenbol M."/>
            <person name="Bargues M."/>
            <person name="Terol J."/>
            <person name="Torres A."/>
            <person name="Perez-Perez A."/>
            <person name="Purnelle B."/>
            <person name="Bent E."/>
            <person name="Johnson S."/>
            <person name="Tacon D."/>
            <person name="Jesse T."/>
            <person name="Heijnen L."/>
            <person name="Schwarz S."/>
            <person name="Scholler P."/>
            <person name="Heber S."/>
            <person name="Francs P."/>
            <person name="Bielke C."/>
            <person name="Frishman D."/>
            <person name="Haase D."/>
            <person name="Lemcke K."/>
            <person name="Mewes H.-W."/>
            <person name="Stocker S."/>
            <person name="Zaccaria P."/>
            <person name="Bevan M."/>
            <person name="Wilson R.K."/>
            <person name="de la Bastide M."/>
            <person name="Habermann K."/>
            <person name="Parnell L."/>
            <person name="Dedhia N."/>
            <person name="Gnoj L."/>
            <person name="Schutz K."/>
            <person name="Huang E."/>
            <person name="Spiegel L."/>
            <person name="Sekhon M."/>
            <person name="Murray J."/>
            <person name="Sheet P."/>
            <person name="Cordes M."/>
            <person name="Abu-Threideh J."/>
            <person name="Stoneking T."/>
            <person name="Kalicki J."/>
            <person name="Graves T."/>
            <person name="Harmon G."/>
            <person name="Edwards J."/>
            <person name="Latreille P."/>
            <person name="Courtney L."/>
            <person name="Cloud J."/>
            <person name="Abbott A."/>
            <person name="Scott K."/>
            <person name="Johnson D."/>
            <person name="Minx P."/>
            <person name="Bentley D."/>
            <person name="Fulton B."/>
            <person name="Miller N."/>
            <person name="Greco T."/>
            <person name="Kemp K."/>
            <person name="Kramer J."/>
            <person name="Fulton L."/>
            <person name="Mardis E."/>
            <person name="Dante M."/>
            <person name="Pepin K."/>
            <person name="Hillier L.W."/>
            <person name="Nelson J."/>
            <person name="Spieth J."/>
            <person name="Ryan E."/>
            <person name="Andrews S."/>
            <person name="Geisel C."/>
            <person name="Layman D."/>
            <person name="Du H."/>
            <person name="Ali J."/>
            <person name="Berghoff A."/>
            <person name="Jones K."/>
            <person name="Drone K."/>
            <person name="Cotton M."/>
            <person name="Joshu C."/>
            <person name="Antonoiu B."/>
            <person name="Zidanic M."/>
            <person name="Strong C."/>
            <person name="Sun H."/>
            <person name="Lamar B."/>
            <person name="Yordan C."/>
            <person name="Ma P."/>
            <person name="Zhong J."/>
            <person name="Preston R."/>
            <person name="Vil D."/>
            <person name="Shekher M."/>
            <person name="Matero A."/>
            <person name="Shah R."/>
            <person name="Swaby I.K."/>
            <person name="O'Shaughnessy A."/>
            <person name="Rodriguez M."/>
            <person name="Hoffman J."/>
            <person name="Till S."/>
            <person name="Granat S."/>
            <person name="Shohdy N."/>
            <person name="Hasegawa A."/>
            <person name="Hameed A."/>
            <person name="Lodhi M."/>
            <person name="Johnson A."/>
            <person name="Chen E."/>
            <person name="Marra M.A."/>
            <person name="Martienssen R."/>
            <person name="McCombie W.R."/>
        </authorList>
    </citation>
    <scope>NUCLEOTIDE SEQUENCE [LARGE SCALE GENOMIC DNA]</scope>
    <source>
        <strain>cv. Columbia</strain>
    </source>
</reference>
<reference key="2">
    <citation type="journal article" date="2017" name="Plant J.">
        <title>Araport11: a complete reannotation of the Arabidopsis thaliana reference genome.</title>
        <authorList>
            <person name="Cheng C.Y."/>
            <person name="Krishnakumar V."/>
            <person name="Chan A.P."/>
            <person name="Thibaud-Nissen F."/>
            <person name="Schobel S."/>
            <person name="Town C.D."/>
        </authorList>
    </citation>
    <scope>GENOME REANNOTATION</scope>
    <source>
        <strain>cv. Columbia</strain>
    </source>
</reference>
<sequence>MDTAKVEPPQETKKTILTAQTPLSMSISSLPDEIVLSFLALISKSYYRSLSLVSKSFYSLLSSTEIYAARSHIGATEPCPYVCLWLPKKHRWFTLAEIEGKLSLEPVRLSSSYPRTRVNSTTVAAGTEIYKIGGTVKGKRSRAVFVLDCWTHRWRRAPNMRVSRVGAKSCFLDGNIYVIGGCRKSEEESMNCGEVFDLKTQTWNPLPSPSVNYAVHSNHKVAVSGERLYVITKRNNYAYDPNEGRWLPDVGSVDLQPITGPWSGGIEKVMKPITGRPWKYTWYSSSHRAWQRVMGLDVLYDKRGCGYRTIQLVNYGGKLLIIWSEWIMILDGYSLIRSQEKEIWCAVIRLEERMSYFGPQIWGEVESCNVVVPSVPKSYQLSSCQCVSV</sequence>
<feature type="chain" id="PRO_0000283252" description="Putative F-box/kelch-repeat protein At4g35120">
    <location>
        <begin position="1"/>
        <end position="389"/>
    </location>
</feature>
<feature type="domain" description="F-box" evidence="1">
    <location>
        <begin position="24"/>
        <end position="70"/>
    </location>
</feature>
<feature type="repeat" description="Kelch 1">
    <location>
        <begin position="128"/>
        <end position="174"/>
    </location>
</feature>
<feature type="repeat" description="Kelch 2">
    <location>
        <begin position="176"/>
        <end position="225"/>
    </location>
</feature>
<feature type="repeat" description="Kelch 3">
    <location>
        <begin position="227"/>
        <end position="273"/>
    </location>
</feature>
<dbReference type="EMBL" id="AL022023">
    <property type="protein sequence ID" value="CAA17776.1"/>
    <property type="molecule type" value="Genomic_DNA"/>
</dbReference>
<dbReference type="EMBL" id="AL161586">
    <property type="protein sequence ID" value="CAB80229.1"/>
    <property type="molecule type" value="Genomic_DNA"/>
</dbReference>
<dbReference type="EMBL" id="CP002687">
    <property type="protein sequence ID" value="AEE86470.1"/>
    <property type="molecule type" value="Genomic_DNA"/>
</dbReference>
<dbReference type="PIR" id="T05782">
    <property type="entry name" value="T05782"/>
</dbReference>
<dbReference type="RefSeq" id="NP_195238.1">
    <property type="nucleotide sequence ID" value="NM_119678.1"/>
</dbReference>
<dbReference type="SMR" id="O49618"/>
<dbReference type="PaxDb" id="3702-AT4G35120.1"/>
<dbReference type="EnsemblPlants" id="AT4G35120.1">
    <property type="protein sequence ID" value="AT4G35120.1"/>
    <property type="gene ID" value="AT4G35120"/>
</dbReference>
<dbReference type="GeneID" id="829664"/>
<dbReference type="Gramene" id="AT4G35120.1">
    <property type="protein sequence ID" value="AT4G35120.1"/>
    <property type="gene ID" value="AT4G35120"/>
</dbReference>
<dbReference type="KEGG" id="ath:AT4G35120"/>
<dbReference type="Araport" id="AT4G35120"/>
<dbReference type="TAIR" id="AT4G35120"/>
<dbReference type="eggNOG" id="KOG1072">
    <property type="taxonomic scope" value="Eukaryota"/>
</dbReference>
<dbReference type="HOGENOM" id="CLU_032521_1_2_1"/>
<dbReference type="InParanoid" id="O49618"/>
<dbReference type="OMA" id="DEIGANC"/>
<dbReference type="PhylomeDB" id="O49618"/>
<dbReference type="PRO" id="PR:O49618"/>
<dbReference type="Proteomes" id="UP000006548">
    <property type="component" value="Chromosome 4"/>
</dbReference>
<dbReference type="ExpressionAtlas" id="O49618">
    <property type="expression patterns" value="baseline and differential"/>
</dbReference>
<dbReference type="CDD" id="cd22152">
    <property type="entry name" value="F-box_AtAFR-like"/>
    <property type="match status" value="1"/>
</dbReference>
<dbReference type="Gene3D" id="2.120.10.80">
    <property type="entry name" value="Kelch-type beta propeller"/>
    <property type="match status" value="1"/>
</dbReference>
<dbReference type="InterPro" id="IPR050354">
    <property type="entry name" value="F-box/kelch-repeat_ARATH"/>
</dbReference>
<dbReference type="InterPro" id="IPR001810">
    <property type="entry name" value="F-box_dom"/>
</dbReference>
<dbReference type="InterPro" id="IPR015915">
    <property type="entry name" value="Kelch-typ_b-propeller"/>
</dbReference>
<dbReference type="InterPro" id="IPR006652">
    <property type="entry name" value="Kelch_1"/>
</dbReference>
<dbReference type="PANTHER" id="PTHR24414:SF161">
    <property type="entry name" value="F-BOX DOMAIN-CONTAINING PROTEIN"/>
    <property type="match status" value="1"/>
</dbReference>
<dbReference type="PANTHER" id="PTHR24414">
    <property type="entry name" value="F-BOX/KELCH-REPEAT PROTEIN SKIP4"/>
    <property type="match status" value="1"/>
</dbReference>
<dbReference type="Pfam" id="PF00646">
    <property type="entry name" value="F-box"/>
    <property type="match status" value="1"/>
</dbReference>
<dbReference type="Pfam" id="PF25210">
    <property type="entry name" value="Kelch_FKB95"/>
    <property type="match status" value="1"/>
</dbReference>
<dbReference type="SMART" id="SM00612">
    <property type="entry name" value="Kelch"/>
    <property type="match status" value="2"/>
</dbReference>
<dbReference type="SUPFAM" id="SSF117281">
    <property type="entry name" value="Kelch motif"/>
    <property type="match status" value="1"/>
</dbReference>
<dbReference type="PROSITE" id="PS50181">
    <property type="entry name" value="FBOX"/>
    <property type="match status" value="1"/>
</dbReference>
<evidence type="ECO:0000255" key="1">
    <source>
        <dbReference type="PROSITE-ProRule" id="PRU00080"/>
    </source>
</evidence>
<name>FBK94_ARATH</name>
<accession>O49618</accession>
<gene>
    <name type="ordered locus">At4g35120</name>
    <name type="ORF">M4E13.170</name>
</gene>
<protein>
    <recommendedName>
        <fullName>Putative F-box/kelch-repeat protein At4g35120</fullName>
    </recommendedName>
</protein>
<keyword id="KW-0880">Kelch repeat</keyword>
<keyword id="KW-1185">Reference proteome</keyword>
<keyword id="KW-0677">Repeat</keyword>
<organism>
    <name type="scientific">Arabidopsis thaliana</name>
    <name type="common">Mouse-ear cress</name>
    <dbReference type="NCBI Taxonomy" id="3702"/>
    <lineage>
        <taxon>Eukaryota</taxon>
        <taxon>Viridiplantae</taxon>
        <taxon>Streptophyta</taxon>
        <taxon>Embryophyta</taxon>
        <taxon>Tracheophyta</taxon>
        <taxon>Spermatophyta</taxon>
        <taxon>Magnoliopsida</taxon>
        <taxon>eudicotyledons</taxon>
        <taxon>Gunneridae</taxon>
        <taxon>Pentapetalae</taxon>
        <taxon>rosids</taxon>
        <taxon>malvids</taxon>
        <taxon>Brassicales</taxon>
        <taxon>Brassicaceae</taxon>
        <taxon>Camelineae</taxon>
        <taxon>Arabidopsis</taxon>
    </lineage>
</organism>